<organism>
    <name type="scientific">Agrobacterium fabrum (strain C58 / ATCC 33970)</name>
    <name type="common">Agrobacterium tumefaciens (strain C58)</name>
    <dbReference type="NCBI Taxonomy" id="176299"/>
    <lineage>
        <taxon>Bacteria</taxon>
        <taxon>Pseudomonadati</taxon>
        <taxon>Pseudomonadota</taxon>
        <taxon>Alphaproteobacteria</taxon>
        <taxon>Hyphomicrobiales</taxon>
        <taxon>Rhizobiaceae</taxon>
        <taxon>Rhizobium/Agrobacterium group</taxon>
        <taxon>Agrobacterium</taxon>
        <taxon>Agrobacterium tumefaciens complex</taxon>
    </lineage>
</organism>
<geneLocation type="plasmid">
    <name>AT</name>
</geneLocation>
<sequence length="553" mass="59523">MEDIMTSLLVATSRVVVTISLAYVPVKSAFAAPQNAAGLCSAIAASSIPASRISLPTTGAKIQSATLIGGSDPANQNGEYCKVIGQIKPVDPKAPDIIWQVNLPSVWNGKMLQYGGGGYNGSIPPTTDKTTLGLDVVPTPLTQGYVTFGSDSGHQAPNADDASFAKNDEAMLNYGYMHIKKVLDVAKVLVTERYEKPVTRVYFQGGSTGGREGLTAASRWPESYDGILTNYPTANFVGLRLWGAGLARAVYDDKSAGWIPPKLVERISKEALKSCDGLDGVEDGLVGNMQQCRAQSAVLVQSLACKSDVTGNPDDCLTQAQIERTLKIYHEGYSLPYQLANGINTYPGYNSLEGIMMQLGSEPQMRTPPVSGPNAHHSSRSFEFLQNFVQRDQPLNLLSFDIREPGKLKDRIVELSDVIGATRTDWSTFSDRGGKIIWLQGNDDPSVSPLGNAKLFESIVAKMGADKVKGFMRFFLVPGLAHGGGRFSPTWDNLAALDNWVEHDVPPSNPVVVDATKSSTKGRSRPLCEYPSWPKYKGDGDVAIASSFSCADD</sequence>
<proteinExistence type="inferred from homology"/>
<comment type="similarity">
    <text evidence="3">Belongs to the tannase family.</text>
</comment>
<comment type="sequence caution" evidence="3">
    <conflict type="erroneous initiation">
        <sequence resource="EMBL-CDS" id="AAK90635"/>
    </conflict>
</comment>
<dbReference type="EC" id="3.1.1.-" evidence="3"/>
<dbReference type="EMBL" id="AE007872">
    <property type="protein sequence ID" value="AAK90635.2"/>
    <property type="status" value="ALT_INIT"/>
    <property type="molecule type" value="Genomic_DNA"/>
</dbReference>
<dbReference type="PIR" id="AH3191">
    <property type="entry name" value="AH3191"/>
</dbReference>
<dbReference type="RefSeq" id="NP_396194.2">
    <property type="nucleotide sequence ID" value="NC_003064.2"/>
</dbReference>
<dbReference type="RefSeq" id="WP_010974521.1">
    <property type="nucleotide sequence ID" value="NC_003064.2"/>
</dbReference>
<dbReference type="SMR" id="Q8UK62"/>
<dbReference type="ESTHER" id="agrt5-y5261">
    <property type="family name" value="Tannase"/>
</dbReference>
<dbReference type="EnsemblBacteria" id="AAK90635">
    <property type="protein sequence ID" value="AAK90635"/>
    <property type="gene ID" value="Atu5261"/>
</dbReference>
<dbReference type="GeneID" id="1137034"/>
<dbReference type="KEGG" id="atu:Atu5261"/>
<dbReference type="PATRIC" id="fig|176299.10.peg.4936"/>
<dbReference type="eggNOG" id="COG0627">
    <property type="taxonomic scope" value="Bacteria"/>
</dbReference>
<dbReference type="HOGENOM" id="CLU_014819_4_0_5"/>
<dbReference type="OrthoDB" id="7197884at2"/>
<dbReference type="BioCyc" id="AGRO:ATU5261-MONOMER"/>
<dbReference type="Proteomes" id="UP000000813">
    <property type="component" value="Plasmid At"/>
</dbReference>
<dbReference type="GO" id="GO:0052689">
    <property type="term" value="F:carboxylic ester hydrolase activity"/>
    <property type="evidence" value="ECO:0007669"/>
    <property type="project" value="UniProtKB-KW"/>
</dbReference>
<dbReference type="GO" id="GO:0046872">
    <property type="term" value="F:metal ion binding"/>
    <property type="evidence" value="ECO:0007669"/>
    <property type="project" value="UniProtKB-KW"/>
</dbReference>
<dbReference type="InterPro" id="IPR029058">
    <property type="entry name" value="AB_hydrolase_fold"/>
</dbReference>
<dbReference type="InterPro" id="IPR011118">
    <property type="entry name" value="Tannase/feruloyl_esterase"/>
</dbReference>
<dbReference type="PANTHER" id="PTHR33938">
    <property type="entry name" value="FERULOYL ESTERASE B-RELATED"/>
    <property type="match status" value="1"/>
</dbReference>
<dbReference type="PANTHER" id="PTHR33938:SF15">
    <property type="entry name" value="FERULOYL ESTERASE B-RELATED"/>
    <property type="match status" value="1"/>
</dbReference>
<dbReference type="Pfam" id="PF07519">
    <property type="entry name" value="Tannase"/>
    <property type="match status" value="1"/>
</dbReference>
<dbReference type="SUPFAM" id="SSF53474">
    <property type="entry name" value="alpha/beta-Hydrolases"/>
    <property type="match status" value="1"/>
</dbReference>
<gene>
    <name type="ordered locus">Atu5261</name>
    <name type="ORF">AGR_pAT_374</name>
</gene>
<accession>Q8UK62</accession>
<accession>Q7D3H8</accession>
<protein>
    <recommendedName>
        <fullName evidence="3">Uncharacterized esterase Atu5261</fullName>
        <ecNumber evidence="3">3.1.1.-</ecNumber>
    </recommendedName>
</protein>
<name>Y5261_AGRFC</name>
<reference key="1">
    <citation type="journal article" date="2001" name="Science">
        <title>The genome of the natural genetic engineer Agrobacterium tumefaciens C58.</title>
        <authorList>
            <person name="Wood D.W."/>
            <person name="Setubal J.C."/>
            <person name="Kaul R."/>
            <person name="Monks D.E."/>
            <person name="Kitajima J.P."/>
            <person name="Okura V.K."/>
            <person name="Zhou Y."/>
            <person name="Chen L."/>
            <person name="Wood G.E."/>
            <person name="Almeida N.F. Jr."/>
            <person name="Woo L."/>
            <person name="Chen Y."/>
            <person name="Paulsen I.T."/>
            <person name="Eisen J.A."/>
            <person name="Karp P.D."/>
            <person name="Bovee D. Sr."/>
            <person name="Chapman P."/>
            <person name="Clendenning J."/>
            <person name="Deatherage G."/>
            <person name="Gillet W."/>
            <person name="Grant C."/>
            <person name="Kutyavin T."/>
            <person name="Levy R."/>
            <person name="Li M.-J."/>
            <person name="McClelland E."/>
            <person name="Palmieri A."/>
            <person name="Raymond C."/>
            <person name="Rouse G."/>
            <person name="Saenphimmachak C."/>
            <person name="Wu Z."/>
            <person name="Romero P."/>
            <person name="Gordon D."/>
            <person name="Zhang S."/>
            <person name="Yoo H."/>
            <person name="Tao Y."/>
            <person name="Biddle P."/>
            <person name="Jung M."/>
            <person name="Krespan W."/>
            <person name="Perry M."/>
            <person name="Gordon-Kamm B."/>
            <person name="Liao L."/>
            <person name="Kim S."/>
            <person name="Hendrick C."/>
            <person name="Zhao Z.-Y."/>
            <person name="Dolan M."/>
            <person name="Chumley F."/>
            <person name="Tingey S.V."/>
            <person name="Tomb J.-F."/>
            <person name="Gordon M.P."/>
            <person name="Olson M.V."/>
            <person name="Nester E.W."/>
        </authorList>
    </citation>
    <scope>NUCLEOTIDE SEQUENCE [LARGE SCALE GENOMIC DNA]</scope>
</reference>
<reference key="2">
    <citation type="journal article" date="2001" name="Science">
        <title>Genome sequence of the plant pathogen and biotechnology agent Agrobacterium tumefaciens C58.</title>
        <authorList>
            <person name="Goodner B."/>
            <person name="Hinkle G."/>
            <person name="Gattung S."/>
            <person name="Miller N."/>
            <person name="Blanchard M."/>
            <person name="Qurollo B."/>
            <person name="Goldman B.S."/>
            <person name="Cao Y."/>
            <person name="Askenazi M."/>
            <person name="Halling C."/>
            <person name="Mullin L."/>
            <person name="Houmiel K."/>
            <person name="Gordon J."/>
            <person name="Vaudin M."/>
            <person name="Iartchouk O."/>
            <person name="Epp A."/>
            <person name="Liu F."/>
            <person name="Wollam C."/>
            <person name="Allinger M."/>
            <person name="Doughty D."/>
            <person name="Scott C."/>
            <person name="Lappas C."/>
            <person name="Markelz B."/>
            <person name="Flanagan C."/>
            <person name="Crowell C."/>
            <person name="Gurson J."/>
            <person name="Lomo C."/>
            <person name="Sear C."/>
            <person name="Strub G."/>
            <person name="Cielo C."/>
            <person name="Slater S."/>
        </authorList>
    </citation>
    <scope>NUCLEOTIDE SEQUENCE [LARGE SCALE GENOMIC DNA]</scope>
    <source>
        <strain>C58 / ATCC 33970</strain>
    </source>
</reference>
<feature type="signal peptide" evidence="2">
    <location>
        <begin position="1"/>
        <end position="31"/>
    </location>
</feature>
<feature type="chain" id="PRO_0000221473" description="Uncharacterized esterase Atu5261">
    <location>
        <begin position="32"/>
        <end position="553"/>
    </location>
</feature>
<feature type="active site" description="Acyl-ester intermediate" evidence="1">
    <location>
        <position position="207"/>
    </location>
</feature>
<feature type="active site" description="Charge relay system" evidence="1">
    <location>
        <position position="444"/>
    </location>
</feature>
<feature type="active site" description="Charge relay system" evidence="1">
    <location>
        <position position="482"/>
    </location>
</feature>
<feature type="binding site" evidence="1">
    <location>
        <position position="276"/>
    </location>
    <ligand>
        <name>Ca(2+)</name>
        <dbReference type="ChEBI" id="CHEBI:29108"/>
    </ligand>
</feature>
<feature type="binding site" evidence="1">
    <location>
        <position position="279"/>
    </location>
    <ligand>
        <name>Ca(2+)</name>
        <dbReference type="ChEBI" id="CHEBI:29108"/>
    </ligand>
</feature>
<feature type="binding site" evidence="1">
    <location>
        <position position="281"/>
    </location>
    <ligand>
        <name>Ca(2+)</name>
        <dbReference type="ChEBI" id="CHEBI:29108"/>
    </ligand>
</feature>
<feature type="binding site" evidence="1">
    <location>
        <position position="283"/>
    </location>
    <ligand>
        <name>Ca(2+)</name>
        <dbReference type="ChEBI" id="CHEBI:29108"/>
    </ligand>
</feature>
<feature type="binding site" evidence="1">
    <location>
        <position position="285"/>
    </location>
    <ligand>
        <name>Ca(2+)</name>
        <dbReference type="ChEBI" id="CHEBI:29108"/>
    </ligand>
</feature>
<feature type="disulfide bond" evidence="1">
    <location>
        <begin position="275"/>
        <end position="292"/>
    </location>
</feature>
<feature type="disulfide bond" evidence="1">
    <location>
        <begin position="528"/>
        <end position="550"/>
    </location>
</feature>
<keyword id="KW-0106">Calcium</keyword>
<keyword id="KW-1015">Disulfide bond</keyword>
<keyword id="KW-0378">Hydrolase</keyword>
<keyword id="KW-0479">Metal-binding</keyword>
<keyword id="KW-0614">Plasmid</keyword>
<keyword id="KW-1185">Reference proteome</keyword>
<keyword id="KW-0719">Serine esterase</keyword>
<keyword id="KW-0732">Signal</keyword>
<evidence type="ECO:0000250" key="1">
    <source>
        <dbReference type="UniProtKB" id="Q2UP89"/>
    </source>
</evidence>
<evidence type="ECO:0000255" key="2"/>
<evidence type="ECO:0000305" key="3"/>